<name>CENPB_CRIGR</name>
<organism>
    <name type="scientific">Cricetulus griseus</name>
    <name type="common">Chinese hamster</name>
    <name type="synonym">Cricetulus barabensis griseus</name>
    <dbReference type="NCBI Taxonomy" id="10029"/>
    <lineage>
        <taxon>Eukaryota</taxon>
        <taxon>Metazoa</taxon>
        <taxon>Chordata</taxon>
        <taxon>Craniata</taxon>
        <taxon>Vertebrata</taxon>
        <taxon>Euteleostomi</taxon>
        <taxon>Mammalia</taxon>
        <taxon>Eutheria</taxon>
        <taxon>Euarchontoglires</taxon>
        <taxon>Glires</taxon>
        <taxon>Rodentia</taxon>
        <taxon>Myomorpha</taxon>
        <taxon>Muroidea</taxon>
        <taxon>Cricetidae</taxon>
        <taxon>Cricetinae</taxon>
        <taxon>Cricetulus</taxon>
    </lineage>
</organism>
<reference key="1">
    <citation type="journal article" date="1996" name="Biochim. Biophys. Acta">
        <title>Molecular cloning of an intronless gene for the hamster centromere antigen CENP-B.</title>
        <authorList>
            <person name="Bejarano L.A."/>
            <person name="Valdivia M.M."/>
        </authorList>
    </citation>
    <scope>NUCLEOTIDE SEQUENCE [GENOMIC DNA]</scope>
    <source>
        <tissue>Ovary</tissue>
    </source>
</reference>
<sequence>MGPKRRQLTFREKSRIIQEVEENPDLRKGEIARRFNIPPSTLSTILKNKRAILASERKYGVASTCRKTNKLSPYDKLEGLLIAWFQQIRAAGLPVKGIILKEKALRIAEELGMDDFTASNGWLDRFRRRHGVVACSGVTRSRARTSTPRAPAAPAGPAAVPSEGSGGSTPGWRTREEQPPSVAEGYASQDVFSATETSLWYDFLSDQASGLWGGDGTARQATQRLSVLLCANRDGSEKLPPLVAGKSAKPRASQGGLPCDYTANSKGGVTTQALAKYLKALDTRMAAESRRVLLLAGRLAAQSLDTSGLRHVQLAFFPPGTVHPLERGVVQQVKGHYRQAMLLKAMAALEGQDPSGLQLGLVEALHFVAAAWQAVEPADIATCFREAGFGGGLNATITTSFKSEGEEEEEEEEEEEEEEEEEGEGEEEEEEEEEGEEEGGEGEEVGEEEEVEEEGDESDEEEEEEEEEEEESSSEGLEAEDWAQGVVEASGGFGGYSVQEEAQCPTLHFLEGGEDSDSDSDEEEEDEEEDEEDEEDDDDDEDGDEVPVPSFGEAMAYFAMVKRYLTSFPIDDRVQSHILHLEHDLVHVTRKNHAWQAGVRGLGHQS</sequence>
<keyword id="KW-0013">ADP-ribosylation</keyword>
<keyword id="KW-0137">Centromere</keyword>
<keyword id="KW-0158">Chromosome</keyword>
<keyword id="KW-0238">DNA-binding</keyword>
<keyword id="KW-1017">Isopeptide bond</keyword>
<keyword id="KW-0488">Methylation</keyword>
<keyword id="KW-0539">Nucleus</keyword>
<keyword id="KW-0597">Phosphoprotein</keyword>
<keyword id="KW-0832">Ubl conjugation</keyword>
<gene>
    <name type="primary">CENPB</name>
</gene>
<protein>
    <recommendedName>
        <fullName>Major centromere autoantigen B</fullName>
        <shortName>Centromere protein B</shortName>
    </recommendedName>
    <alternativeName>
        <fullName>CENP-B</fullName>
    </alternativeName>
</protein>
<feature type="initiator methionine" description="Removed" evidence="2">
    <location>
        <position position="1"/>
    </location>
</feature>
<feature type="chain" id="PRO_0000126124" description="Major centromere autoantigen B">
    <location>
        <begin position="2"/>
        <end position="606"/>
    </location>
</feature>
<feature type="domain" description="HTH psq-type" evidence="4">
    <location>
        <begin position="2"/>
        <end position="52"/>
    </location>
</feature>
<feature type="domain" description="HTH CENPB-type" evidence="5">
    <location>
        <begin position="65"/>
        <end position="136"/>
    </location>
</feature>
<feature type="DNA-binding region" description="H-T-H motif" evidence="1">
    <location>
        <begin position="28"/>
        <end position="48"/>
    </location>
</feature>
<feature type="DNA-binding region" description="H-T-H motif" evidence="1">
    <location>
        <begin position="97"/>
        <end position="129"/>
    </location>
</feature>
<feature type="region of interest" description="Disordered" evidence="6">
    <location>
        <begin position="138"/>
        <end position="184"/>
    </location>
</feature>
<feature type="region of interest" description="Disordered" evidence="6">
    <location>
        <begin position="392"/>
        <end position="480"/>
    </location>
</feature>
<feature type="region of interest" description="Disordered" evidence="6">
    <location>
        <begin position="504"/>
        <end position="549"/>
    </location>
</feature>
<feature type="region of interest" description="Homodimerization" evidence="1">
    <location>
        <begin position="543"/>
        <end position="606"/>
    </location>
</feature>
<feature type="compositionally biased region" description="Low complexity" evidence="6">
    <location>
        <begin position="144"/>
        <end position="163"/>
    </location>
</feature>
<feature type="compositionally biased region" description="Acidic residues" evidence="6">
    <location>
        <begin position="405"/>
        <end position="480"/>
    </location>
</feature>
<feature type="compositionally biased region" description="Acidic residues" evidence="6">
    <location>
        <begin position="512"/>
        <end position="545"/>
    </location>
</feature>
<feature type="modified residue" description="N,N,N-trimethylglycine" evidence="2">
    <location>
        <position position="2"/>
    </location>
</feature>
<feature type="modified residue" description="Phosphoserine" evidence="2">
    <location>
        <position position="165"/>
    </location>
</feature>
<feature type="modified residue" description="Phosphothreonine" evidence="2">
    <location>
        <position position="396"/>
    </location>
</feature>
<feature type="modified residue" description="Phosphothreonine" evidence="2">
    <location>
        <position position="398"/>
    </location>
</feature>
<feature type="cross-link" description="Glycyl lysine isopeptide (Lys-Gly) (interchain with G-Cter in SUMO2)" evidence="2">
    <location>
        <position position="246"/>
    </location>
</feature>
<accession>P48988</accession>
<proteinExistence type="inferred from homology"/>
<comment type="function">
    <text evidence="2">Interacts with centromeric heterochromatin in chromosomes and binds to a specific 17 bp subset of alphoid satellite DNA, called the CENP-B box. May organize arrays of centromere satellite DNA into a higher-order structure which then directs centromere formation and kinetochore assembly in mammalian chromosomes.</text>
</comment>
<comment type="subunit">
    <text evidence="2">Antiparallel homodimer. Interacts with CENPT. Identified in a centromere complex containing histones H2A, H2B and H4, and at least CENPA, CENPB, CENPC, CENPT, CENPN, HJURP, SUPT16H, SSRP1 and RSF1.</text>
</comment>
<comment type="subcellular location">
    <subcellularLocation>
        <location evidence="2">Nucleus</location>
    </subcellularLocation>
    <subcellularLocation>
        <location evidence="2">Chromosome</location>
        <location evidence="2">Centromere</location>
    </subcellularLocation>
</comment>
<comment type="PTM">
    <text evidence="3">Poly-ADP-ribosylated by PARP1.</text>
</comment>
<comment type="PTM">
    <text evidence="2">N-terminally methylated by METTL11A/NTM1. Alpha-N-methylation is stimulated in response to extracellular stimuli, including increased cell density and heat shock, and seems to facilitate binding to CENP-B boxes. Chromatin-bound CENP-B is primarily trimethylated.</text>
</comment>
<dbReference type="EMBL" id="U20951">
    <property type="protein sequence ID" value="AAB06494.1"/>
    <property type="molecule type" value="Genomic_DNA"/>
</dbReference>
<dbReference type="PIR" id="S70358">
    <property type="entry name" value="S70358"/>
</dbReference>
<dbReference type="RefSeq" id="NP_001231328.1">
    <property type="nucleotide sequence ID" value="NM_001244399.1"/>
</dbReference>
<dbReference type="SMR" id="P48988"/>
<dbReference type="PaxDb" id="10029-NP_001231328.1"/>
<dbReference type="GeneID" id="100689274"/>
<dbReference type="KEGG" id="cge:100689274"/>
<dbReference type="CTD" id="1059"/>
<dbReference type="eggNOG" id="KOG3105">
    <property type="taxonomic scope" value="Eukaryota"/>
</dbReference>
<dbReference type="OrthoDB" id="125347at2759"/>
<dbReference type="Proteomes" id="UP000694386">
    <property type="component" value="Unplaced"/>
</dbReference>
<dbReference type="Proteomes" id="UP001108280">
    <property type="component" value="Chromosome 6"/>
</dbReference>
<dbReference type="GO" id="GO:0000775">
    <property type="term" value="C:chromosome, centromeric region"/>
    <property type="evidence" value="ECO:0007669"/>
    <property type="project" value="UniProtKB-SubCell"/>
</dbReference>
<dbReference type="GO" id="GO:0005634">
    <property type="term" value="C:nucleus"/>
    <property type="evidence" value="ECO:0007669"/>
    <property type="project" value="UniProtKB-SubCell"/>
</dbReference>
<dbReference type="GO" id="GO:0003682">
    <property type="term" value="F:chromatin binding"/>
    <property type="evidence" value="ECO:0007669"/>
    <property type="project" value="InterPro"/>
</dbReference>
<dbReference type="GO" id="GO:0003677">
    <property type="term" value="F:DNA binding"/>
    <property type="evidence" value="ECO:0007669"/>
    <property type="project" value="UniProtKB-KW"/>
</dbReference>
<dbReference type="FunFam" id="1.10.10.60:FF:000313">
    <property type="entry name" value="major centromere autoantigen B"/>
    <property type="match status" value="1"/>
</dbReference>
<dbReference type="FunFam" id="1.10.287.1090:FF:000001">
    <property type="entry name" value="major centromere autoantigen B"/>
    <property type="match status" value="1"/>
</dbReference>
<dbReference type="Gene3D" id="1.10.287.1090">
    <property type="entry name" value="Dimerisation domain of CENP-B"/>
    <property type="match status" value="1"/>
</dbReference>
<dbReference type="Gene3D" id="1.10.10.60">
    <property type="entry name" value="Homeodomain-like"/>
    <property type="match status" value="2"/>
</dbReference>
<dbReference type="InterPro" id="IPR015115">
    <property type="entry name" value="CenpB_C"/>
</dbReference>
<dbReference type="InterPro" id="IPR050863">
    <property type="entry name" value="CenT-Element_Derived"/>
</dbReference>
<dbReference type="InterPro" id="IPR004875">
    <property type="entry name" value="DDE_SF_endonuclease_dom"/>
</dbReference>
<dbReference type="InterPro" id="IPR034882">
    <property type="entry name" value="Dimerisation_CENP-B_sf"/>
</dbReference>
<dbReference type="InterPro" id="IPR009057">
    <property type="entry name" value="Homeodomain-like_sf"/>
</dbReference>
<dbReference type="InterPro" id="IPR006600">
    <property type="entry name" value="HTH_CenpB_DNA-bd_dom"/>
</dbReference>
<dbReference type="InterPro" id="IPR007889">
    <property type="entry name" value="HTH_Psq"/>
</dbReference>
<dbReference type="PANTHER" id="PTHR19303:SF69">
    <property type="entry name" value="MAJOR CENTROMERE AUTOANTIGEN B"/>
    <property type="match status" value="1"/>
</dbReference>
<dbReference type="PANTHER" id="PTHR19303">
    <property type="entry name" value="TRANSPOSON"/>
    <property type="match status" value="1"/>
</dbReference>
<dbReference type="Pfam" id="PF09026">
    <property type="entry name" value="CENP-B_dimeris"/>
    <property type="match status" value="1"/>
</dbReference>
<dbReference type="Pfam" id="PF04218">
    <property type="entry name" value="CENP-B_N"/>
    <property type="match status" value="1"/>
</dbReference>
<dbReference type="Pfam" id="PF03184">
    <property type="entry name" value="DDE_1"/>
    <property type="match status" value="1"/>
</dbReference>
<dbReference type="Pfam" id="PF03221">
    <property type="entry name" value="HTH_Tnp_Tc5"/>
    <property type="match status" value="1"/>
</dbReference>
<dbReference type="SMART" id="SM00674">
    <property type="entry name" value="CENPB"/>
    <property type="match status" value="1"/>
</dbReference>
<dbReference type="SUPFAM" id="SSF101160">
    <property type="entry name" value="Dimerisation domain of CENP-B"/>
    <property type="match status" value="1"/>
</dbReference>
<dbReference type="SUPFAM" id="SSF46689">
    <property type="entry name" value="Homeodomain-like"/>
    <property type="match status" value="2"/>
</dbReference>
<dbReference type="PROSITE" id="PS51253">
    <property type="entry name" value="HTH_CENPB"/>
    <property type="match status" value="1"/>
</dbReference>
<dbReference type="PROSITE" id="PS50960">
    <property type="entry name" value="HTH_PSQ"/>
    <property type="match status" value="1"/>
</dbReference>
<evidence type="ECO:0000250" key="1"/>
<evidence type="ECO:0000250" key="2">
    <source>
        <dbReference type="UniProtKB" id="P07199"/>
    </source>
</evidence>
<evidence type="ECO:0000250" key="3">
    <source>
        <dbReference type="UniProtKB" id="P27790"/>
    </source>
</evidence>
<evidence type="ECO:0000255" key="4">
    <source>
        <dbReference type="PROSITE-ProRule" id="PRU00320"/>
    </source>
</evidence>
<evidence type="ECO:0000255" key="5">
    <source>
        <dbReference type="PROSITE-ProRule" id="PRU00583"/>
    </source>
</evidence>
<evidence type="ECO:0000256" key="6">
    <source>
        <dbReference type="SAM" id="MobiDB-lite"/>
    </source>
</evidence>